<reference key="1">
    <citation type="journal article" date="2004" name="Proc. Natl. Acad. Sci. U.S.A.">
        <title>Genomic plasticity of the causative agent of melioidosis, Burkholderia pseudomallei.</title>
        <authorList>
            <person name="Holden M.T.G."/>
            <person name="Titball R.W."/>
            <person name="Peacock S.J."/>
            <person name="Cerdeno-Tarraga A.-M."/>
            <person name="Atkins T."/>
            <person name="Crossman L.C."/>
            <person name="Pitt T."/>
            <person name="Churcher C."/>
            <person name="Mungall K.L."/>
            <person name="Bentley S.D."/>
            <person name="Sebaihia M."/>
            <person name="Thomson N.R."/>
            <person name="Bason N."/>
            <person name="Beacham I.R."/>
            <person name="Brooks K."/>
            <person name="Brown K.A."/>
            <person name="Brown N.F."/>
            <person name="Challis G.L."/>
            <person name="Cherevach I."/>
            <person name="Chillingworth T."/>
            <person name="Cronin A."/>
            <person name="Crossett B."/>
            <person name="Davis P."/>
            <person name="DeShazer D."/>
            <person name="Feltwell T."/>
            <person name="Fraser A."/>
            <person name="Hance Z."/>
            <person name="Hauser H."/>
            <person name="Holroyd S."/>
            <person name="Jagels K."/>
            <person name="Keith K.E."/>
            <person name="Maddison M."/>
            <person name="Moule S."/>
            <person name="Price C."/>
            <person name="Quail M.A."/>
            <person name="Rabbinowitsch E."/>
            <person name="Rutherford K."/>
            <person name="Sanders M."/>
            <person name="Simmonds M."/>
            <person name="Songsivilai S."/>
            <person name="Stevens K."/>
            <person name="Tumapa S."/>
            <person name="Vesaratchavest M."/>
            <person name="Whitehead S."/>
            <person name="Yeats C."/>
            <person name="Barrell B.G."/>
            <person name="Oyston P.C.F."/>
            <person name="Parkhill J."/>
        </authorList>
    </citation>
    <scope>NUCLEOTIDE SEQUENCE [LARGE SCALE GENOMIC DNA]</scope>
    <source>
        <strain>K96243</strain>
    </source>
</reference>
<dbReference type="EC" id="2.3.1.275" evidence="1"/>
<dbReference type="EMBL" id="BX571965">
    <property type="protein sequence ID" value="CAH34858.1"/>
    <property type="molecule type" value="Genomic_DNA"/>
</dbReference>
<dbReference type="RefSeq" id="WP_004522633.1">
    <property type="nucleotide sequence ID" value="NZ_CP009538.1"/>
</dbReference>
<dbReference type="RefSeq" id="YP_107491.1">
    <property type="nucleotide sequence ID" value="NC_006350.1"/>
</dbReference>
<dbReference type="SMR" id="Q63WM5"/>
<dbReference type="STRING" id="272560.BPSL0866"/>
<dbReference type="KEGG" id="bps:BPSL0866"/>
<dbReference type="PATRIC" id="fig|272560.51.peg.730"/>
<dbReference type="eggNOG" id="COG0344">
    <property type="taxonomic scope" value="Bacteria"/>
</dbReference>
<dbReference type="UniPathway" id="UPA00085"/>
<dbReference type="Proteomes" id="UP000000605">
    <property type="component" value="Chromosome 1"/>
</dbReference>
<dbReference type="GO" id="GO:0005886">
    <property type="term" value="C:plasma membrane"/>
    <property type="evidence" value="ECO:0007669"/>
    <property type="project" value="UniProtKB-SubCell"/>
</dbReference>
<dbReference type="GO" id="GO:0043772">
    <property type="term" value="F:acyl-phosphate glycerol-3-phosphate acyltransferase activity"/>
    <property type="evidence" value="ECO:0007669"/>
    <property type="project" value="UniProtKB-UniRule"/>
</dbReference>
<dbReference type="GO" id="GO:0008654">
    <property type="term" value="P:phospholipid biosynthetic process"/>
    <property type="evidence" value="ECO:0007669"/>
    <property type="project" value="UniProtKB-UniRule"/>
</dbReference>
<dbReference type="HAMAP" id="MF_01043">
    <property type="entry name" value="PlsY"/>
    <property type="match status" value="1"/>
</dbReference>
<dbReference type="InterPro" id="IPR003811">
    <property type="entry name" value="G3P_acylTferase_PlsY"/>
</dbReference>
<dbReference type="NCBIfam" id="TIGR00023">
    <property type="entry name" value="glycerol-3-phosphate 1-O-acyltransferase PlsY"/>
    <property type="match status" value="1"/>
</dbReference>
<dbReference type="PANTHER" id="PTHR30309:SF0">
    <property type="entry name" value="GLYCEROL-3-PHOSPHATE ACYLTRANSFERASE-RELATED"/>
    <property type="match status" value="1"/>
</dbReference>
<dbReference type="PANTHER" id="PTHR30309">
    <property type="entry name" value="INNER MEMBRANE PROTEIN YGIH"/>
    <property type="match status" value="1"/>
</dbReference>
<dbReference type="Pfam" id="PF02660">
    <property type="entry name" value="G3P_acyltransf"/>
    <property type="match status" value="1"/>
</dbReference>
<dbReference type="SMART" id="SM01207">
    <property type="entry name" value="G3P_acyltransf"/>
    <property type="match status" value="1"/>
</dbReference>
<organism>
    <name type="scientific">Burkholderia pseudomallei (strain K96243)</name>
    <dbReference type="NCBI Taxonomy" id="272560"/>
    <lineage>
        <taxon>Bacteria</taxon>
        <taxon>Pseudomonadati</taxon>
        <taxon>Pseudomonadota</taxon>
        <taxon>Betaproteobacteria</taxon>
        <taxon>Burkholderiales</taxon>
        <taxon>Burkholderiaceae</taxon>
        <taxon>Burkholderia</taxon>
        <taxon>pseudomallei group</taxon>
    </lineage>
</organism>
<evidence type="ECO:0000255" key="1">
    <source>
        <dbReference type="HAMAP-Rule" id="MF_01043"/>
    </source>
</evidence>
<sequence length="203" mass="21404">MQILLATVAAYLIGSVSFAVVVSAAMGLADPRSYGSKNPGATNVLRSGNKKAAILTLVGDAFKGWLAVWLVKRFGIGGEIGVALAAIAVFLGHLYPVFFRFQGGKGVATAAGVLLAVHPVLGLATALTWLIVAFFFRYSSLAALVAAVFAPIFDVFLFGTRDNPVAWAVLAMSVLLIWRHRSNISKLLAGEESRIGQKKKTGA</sequence>
<name>PLSY_BURPS</name>
<comment type="function">
    <text evidence="1">Catalyzes the transfer of an acyl group from acyl-phosphate (acyl-PO(4)) to glycerol-3-phosphate (G3P) to form lysophosphatidic acid (LPA). This enzyme utilizes acyl-phosphate as fatty acyl donor, but not acyl-CoA or acyl-ACP.</text>
</comment>
<comment type="catalytic activity">
    <reaction evidence="1">
        <text>an acyl phosphate + sn-glycerol 3-phosphate = a 1-acyl-sn-glycero-3-phosphate + phosphate</text>
        <dbReference type="Rhea" id="RHEA:34075"/>
        <dbReference type="ChEBI" id="CHEBI:43474"/>
        <dbReference type="ChEBI" id="CHEBI:57597"/>
        <dbReference type="ChEBI" id="CHEBI:57970"/>
        <dbReference type="ChEBI" id="CHEBI:59918"/>
        <dbReference type="EC" id="2.3.1.275"/>
    </reaction>
</comment>
<comment type="pathway">
    <text evidence="1">Lipid metabolism; phospholipid metabolism.</text>
</comment>
<comment type="subunit">
    <text evidence="1">Probably interacts with PlsX.</text>
</comment>
<comment type="subcellular location">
    <subcellularLocation>
        <location evidence="1">Cell inner membrane</location>
        <topology evidence="1">Multi-pass membrane protein</topology>
    </subcellularLocation>
</comment>
<comment type="similarity">
    <text evidence="1">Belongs to the PlsY family.</text>
</comment>
<gene>
    <name evidence="1" type="primary">plsY</name>
    <name type="ordered locus">BPSL0866</name>
</gene>
<feature type="chain" id="PRO_0000188340" description="Glycerol-3-phosphate acyltransferase">
    <location>
        <begin position="1"/>
        <end position="203"/>
    </location>
</feature>
<feature type="transmembrane region" description="Helical" evidence="1">
    <location>
        <begin position="3"/>
        <end position="23"/>
    </location>
</feature>
<feature type="transmembrane region" description="Helical" evidence="1">
    <location>
        <begin position="51"/>
        <end position="71"/>
    </location>
</feature>
<feature type="transmembrane region" description="Helical" evidence="1">
    <location>
        <begin position="74"/>
        <end position="94"/>
    </location>
</feature>
<feature type="transmembrane region" description="Helical" evidence="1">
    <location>
        <begin position="116"/>
        <end position="136"/>
    </location>
</feature>
<feature type="transmembrane region" description="Helical" evidence="1">
    <location>
        <begin position="140"/>
        <end position="160"/>
    </location>
</feature>
<feature type="transmembrane region" description="Helical" evidence="1">
    <location>
        <begin position="164"/>
        <end position="178"/>
    </location>
</feature>
<protein>
    <recommendedName>
        <fullName evidence="1">Glycerol-3-phosphate acyltransferase</fullName>
    </recommendedName>
    <alternativeName>
        <fullName evidence="1">Acyl-PO4 G3P acyltransferase</fullName>
    </alternativeName>
    <alternativeName>
        <fullName evidence="1">Acyl-phosphate--glycerol-3-phosphate acyltransferase</fullName>
    </alternativeName>
    <alternativeName>
        <fullName evidence="1">G3P acyltransferase</fullName>
        <shortName evidence="1">GPAT</shortName>
        <ecNumber evidence="1">2.3.1.275</ecNumber>
    </alternativeName>
    <alternativeName>
        <fullName evidence="1">Lysophosphatidic acid synthase</fullName>
        <shortName evidence="1">LPA synthase</shortName>
    </alternativeName>
</protein>
<proteinExistence type="inferred from homology"/>
<keyword id="KW-0997">Cell inner membrane</keyword>
<keyword id="KW-1003">Cell membrane</keyword>
<keyword id="KW-0444">Lipid biosynthesis</keyword>
<keyword id="KW-0443">Lipid metabolism</keyword>
<keyword id="KW-0472">Membrane</keyword>
<keyword id="KW-0594">Phospholipid biosynthesis</keyword>
<keyword id="KW-1208">Phospholipid metabolism</keyword>
<keyword id="KW-1185">Reference proteome</keyword>
<keyword id="KW-0808">Transferase</keyword>
<keyword id="KW-0812">Transmembrane</keyword>
<keyword id="KW-1133">Transmembrane helix</keyword>
<accession>Q63WM5</accession>